<accession>O36417</accession>
<gene>
    <name evidence="1" type="primary">NEC2</name>
    <name type="ordered locus">67</name>
</gene>
<name>NEC2_ALHV1</name>
<organismHost>
    <name type="scientific">Connochaetes taurinus</name>
    <name type="common">Blue wildebeest</name>
    <dbReference type="NCBI Taxonomy" id="9927"/>
</organismHost>
<protein>
    <recommendedName>
        <fullName evidence="1">Nuclear egress protein 2</fullName>
    </recommendedName>
</protein>
<proteinExistence type="inferred from homology"/>
<organism>
    <name type="scientific">Alcelaphine herpesvirus 1 (strain C500)</name>
    <name type="common">AlHV-1</name>
    <name type="synonym">Malignant catarrhal fever virus</name>
    <dbReference type="NCBI Taxonomy" id="654901"/>
    <lineage>
        <taxon>Viruses</taxon>
        <taxon>Duplodnaviria</taxon>
        <taxon>Heunggongvirae</taxon>
        <taxon>Peploviricota</taxon>
        <taxon>Herviviricetes</taxon>
        <taxon>Herpesvirales</taxon>
        <taxon>Orthoherpesviridae</taxon>
        <taxon>Gammaherpesvirinae</taxon>
        <taxon>Macavirus</taxon>
        <taxon>Macavirus alcelaphinegamma1</taxon>
    </lineage>
</organism>
<feature type="chain" id="PRO_0000405768" description="Nuclear egress protein 2">
    <location>
        <begin position="1"/>
        <end position="263"/>
    </location>
</feature>
<feature type="topological domain" description="Perinuclear space" evidence="1">
    <location>
        <begin position="1"/>
        <end position="235"/>
    </location>
</feature>
<feature type="transmembrane region" description="Helical" evidence="1">
    <location>
        <begin position="236"/>
        <end position="256"/>
    </location>
</feature>
<feature type="topological domain" description="Nuclear" evidence="1">
    <location>
        <begin position="257"/>
        <end position="263"/>
    </location>
</feature>
<evidence type="ECO:0000255" key="1">
    <source>
        <dbReference type="HAMAP-Rule" id="MF_04024"/>
    </source>
</evidence>
<reference key="1">
    <citation type="journal article" date="1997" name="J. Virol.">
        <title>Primary structure of the alcelaphine herpesvirus 1 genome.</title>
        <authorList>
            <person name="Ensser A."/>
            <person name="Pflanz R."/>
            <person name="Fleckenstein B."/>
        </authorList>
    </citation>
    <scope>NUCLEOTIDE SEQUENCE [LARGE SCALE GENOMIC DNA]</scope>
</reference>
<sequence>MASGKKLIDQLCSVVSSFLCPSISSLDIDRCAVGPHIFSRGSSQAICTVKLLHGEVYNLEFVYRYWAHILEKYNFPFSPTFIICNNGLAVTLKCYVSEPRDLSSRYGQATSMALDVNLQRNSFVVLSQDDFIKFKTPLVFAKDLDITNSMVVCRTYLTSSRNSLQFLVVKSKNPRRLENVLDMIKRAVEATGSNLPATREKPLPLEQTEQLESTLPSSGHLRVLQSTSLTGRCPSWGAACALLLLSLAVGLMAILAAKLMQWP</sequence>
<comment type="function">
    <text evidence="1">Plays an essential role in virion nuclear egress, the first step of virion release from infected cell. Within the host nucleus, NEC1 interacts with the newly formed capsid through the vertexes and directs it to the inner nuclear membrane by associating with NEC2. Induces the budding of the capsid at the inner nuclear membrane as well as its envelopment into the perinuclear space. There, the NEC1/NEC2 complex promotes the fusion of the enveloped capsid with the outer nuclear membrane and the subsequent release of the viral capsid into the cytoplasm where it will reach the secondary budding sites in the host Golgi or trans-Golgi network.</text>
</comment>
<comment type="subunit">
    <text evidence="1">Forms a heterohexameric complex with NEC1.</text>
</comment>
<comment type="subcellular location">
    <subcellularLocation>
        <location evidence="1">Host nucleus inner membrane</location>
        <topology evidence="1">Single-pass membrane protein</topology>
    </subcellularLocation>
    <text evidence="1">Also localizes at the transient membrane of perinuclear virions.</text>
</comment>
<comment type="PTM">
    <text evidence="1">Phosphorylated.</text>
</comment>
<comment type="similarity">
    <text evidence="1">Belongs to the herpesviridae NEC2 protein family.</text>
</comment>
<dbReference type="EMBL" id="AF005370">
    <property type="protein sequence ID" value="AAC58114.1"/>
    <property type="molecule type" value="Genomic_DNA"/>
</dbReference>
<dbReference type="PIR" id="T03162">
    <property type="entry name" value="T03162"/>
</dbReference>
<dbReference type="RefSeq" id="NP_065566.1">
    <property type="nucleotide sequence ID" value="NC_002531.1"/>
</dbReference>
<dbReference type="SMR" id="O36417"/>
<dbReference type="KEGG" id="vg:911805"/>
<dbReference type="Proteomes" id="UP000000941">
    <property type="component" value="Segment"/>
</dbReference>
<dbReference type="GO" id="GO:0044201">
    <property type="term" value="C:host cell nuclear inner membrane"/>
    <property type="evidence" value="ECO:0007669"/>
    <property type="project" value="UniProtKB-SubCell"/>
</dbReference>
<dbReference type="GO" id="GO:0016020">
    <property type="term" value="C:membrane"/>
    <property type="evidence" value="ECO:0007669"/>
    <property type="project" value="UniProtKB-KW"/>
</dbReference>
<dbReference type="HAMAP" id="MF_04024">
    <property type="entry name" value="HSV_NEC2"/>
    <property type="match status" value="1"/>
</dbReference>
<dbReference type="InterPro" id="IPR007626">
    <property type="entry name" value="Herpesvirus_viron_egress-type"/>
</dbReference>
<dbReference type="Pfam" id="PF04541">
    <property type="entry name" value="Herpes_U34"/>
    <property type="match status" value="1"/>
</dbReference>
<keyword id="KW-1043">Host membrane</keyword>
<keyword id="KW-1048">Host nucleus</keyword>
<keyword id="KW-0426">Late protein</keyword>
<keyword id="KW-0472">Membrane</keyword>
<keyword id="KW-0597">Phosphoprotein</keyword>
<keyword id="KW-1185">Reference proteome</keyword>
<keyword id="KW-0812">Transmembrane</keyword>
<keyword id="KW-1133">Transmembrane helix</keyword>